<organism>
    <name type="scientific">Staphylococcus epidermidis (strain ATCC 35984 / DSM 28319 / BCRC 17069 / CCUG 31568 / BM 3577 / RP62A)</name>
    <dbReference type="NCBI Taxonomy" id="176279"/>
    <lineage>
        <taxon>Bacteria</taxon>
        <taxon>Bacillati</taxon>
        <taxon>Bacillota</taxon>
        <taxon>Bacilli</taxon>
        <taxon>Bacillales</taxon>
        <taxon>Staphylococcaceae</taxon>
        <taxon>Staphylococcus</taxon>
    </lineage>
</organism>
<keyword id="KW-1003">Cell membrane</keyword>
<keyword id="KW-0472">Membrane</keyword>
<keyword id="KW-1185">Reference proteome</keyword>
<keyword id="KW-0812">Transmembrane</keyword>
<keyword id="KW-1133">Transmembrane helix</keyword>
<name>EBPS_STAEQ</name>
<reference key="1">
    <citation type="journal article" date="2005" name="J. Bacteriol.">
        <title>Insights on evolution of virulence and resistance from the complete genome analysis of an early methicillin-resistant Staphylococcus aureus strain and a biofilm-producing methicillin-resistant Staphylococcus epidermidis strain.</title>
        <authorList>
            <person name="Gill S.R."/>
            <person name="Fouts D.E."/>
            <person name="Archer G.L."/>
            <person name="Mongodin E.F."/>
            <person name="DeBoy R.T."/>
            <person name="Ravel J."/>
            <person name="Paulsen I.T."/>
            <person name="Kolonay J.F."/>
            <person name="Brinkac L.M."/>
            <person name="Beanan M.J."/>
            <person name="Dodson R.J."/>
            <person name="Daugherty S.C."/>
            <person name="Madupu R."/>
            <person name="Angiuoli S.V."/>
            <person name="Durkin A.S."/>
            <person name="Haft D.H."/>
            <person name="Vamathevan J.J."/>
            <person name="Khouri H."/>
            <person name="Utterback T.R."/>
            <person name="Lee C."/>
            <person name="Dimitrov G."/>
            <person name="Jiang L."/>
            <person name="Qin H."/>
            <person name="Weidman J."/>
            <person name="Tran K."/>
            <person name="Kang K.H."/>
            <person name="Hance I.R."/>
            <person name="Nelson K.E."/>
            <person name="Fraser C.M."/>
        </authorList>
    </citation>
    <scope>NUCLEOTIDE SEQUENCE [LARGE SCALE GENOMIC DNA]</scope>
    <source>
        <strain>ATCC 35984 / DSM 28319 / BCRC 17069 / CCUG 31568 / BM 3577 / RP62A</strain>
    </source>
</reference>
<dbReference type="EMBL" id="CP000029">
    <property type="protein sequence ID" value="AAW54390.1"/>
    <property type="molecule type" value="Genomic_DNA"/>
</dbReference>
<dbReference type="SMR" id="Q5HP65"/>
<dbReference type="STRING" id="176279.SERP1048"/>
<dbReference type="KEGG" id="ser:SERP1048"/>
<dbReference type="eggNOG" id="COG1388">
    <property type="taxonomic scope" value="Bacteria"/>
</dbReference>
<dbReference type="HOGENOM" id="CLU_043950_0_0_9"/>
<dbReference type="PRO" id="PR:Q5HP65"/>
<dbReference type="Proteomes" id="UP000000531">
    <property type="component" value="Chromosome"/>
</dbReference>
<dbReference type="GO" id="GO:0005886">
    <property type="term" value="C:plasma membrane"/>
    <property type="evidence" value="ECO:0007669"/>
    <property type="project" value="UniProtKB-SubCell"/>
</dbReference>
<dbReference type="Gene3D" id="3.10.350.10">
    <property type="entry name" value="LysM domain"/>
    <property type="match status" value="1"/>
</dbReference>
<dbReference type="InterPro" id="IPR018392">
    <property type="entry name" value="LysM_dom"/>
</dbReference>
<dbReference type="InterPro" id="IPR036779">
    <property type="entry name" value="LysM_dom_sf"/>
</dbReference>
<dbReference type="NCBIfam" id="NF033598">
    <property type="entry name" value="elast_bind_EbpS"/>
    <property type="match status" value="1"/>
</dbReference>
<dbReference type="Pfam" id="PF01476">
    <property type="entry name" value="LysM"/>
    <property type="match status" value="1"/>
</dbReference>
<dbReference type="SMART" id="SM00257">
    <property type="entry name" value="LysM"/>
    <property type="match status" value="1"/>
</dbReference>
<dbReference type="SUPFAM" id="SSF54106">
    <property type="entry name" value="LysM domain"/>
    <property type="match status" value="1"/>
</dbReference>
<dbReference type="PROSITE" id="PS51782">
    <property type="entry name" value="LYSM"/>
    <property type="match status" value="1"/>
</dbReference>
<accession>Q5HP65</accession>
<proteinExistence type="predicted"/>
<feature type="chain" id="PRO_0000271742" description="Probable elastin-binding protein EbpS">
    <location>
        <begin position="1"/>
        <end position="460"/>
    </location>
</feature>
<feature type="transmembrane region" description="Helical" evidence="1">
    <location>
        <begin position="285"/>
        <end position="305"/>
    </location>
</feature>
<feature type="domain" description="LysM" evidence="2">
    <location>
        <begin position="410"/>
        <end position="458"/>
    </location>
</feature>
<feature type="region of interest" description="Disordered" evidence="3">
    <location>
        <begin position="1"/>
        <end position="277"/>
    </location>
</feature>
<feature type="region of interest" description="Disordered" evidence="3">
    <location>
        <begin position="313"/>
        <end position="411"/>
    </location>
</feature>
<feature type="compositionally biased region" description="Basic and acidic residues" evidence="3">
    <location>
        <begin position="1"/>
        <end position="40"/>
    </location>
</feature>
<feature type="compositionally biased region" description="Low complexity" evidence="3">
    <location>
        <begin position="41"/>
        <end position="57"/>
    </location>
</feature>
<feature type="compositionally biased region" description="Basic and acidic residues" evidence="3">
    <location>
        <begin position="74"/>
        <end position="128"/>
    </location>
</feature>
<feature type="compositionally biased region" description="Low complexity" evidence="3">
    <location>
        <begin position="177"/>
        <end position="192"/>
    </location>
</feature>
<feature type="compositionally biased region" description="Basic and acidic residues" evidence="3">
    <location>
        <begin position="203"/>
        <end position="226"/>
    </location>
</feature>
<feature type="compositionally biased region" description="Low complexity" evidence="3">
    <location>
        <begin position="264"/>
        <end position="273"/>
    </location>
</feature>
<feature type="compositionally biased region" description="Basic and acidic residues" evidence="3">
    <location>
        <begin position="313"/>
        <end position="359"/>
    </location>
</feature>
<feature type="compositionally biased region" description="Low complexity" evidence="3">
    <location>
        <begin position="364"/>
        <end position="411"/>
    </location>
</feature>
<comment type="subcellular location">
    <subcellularLocation>
        <location evidence="4">Cell membrane</location>
        <topology evidence="4">Single-pass membrane protein</topology>
    </subcellularLocation>
</comment>
<protein>
    <recommendedName>
        <fullName>Probable elastin-binding protein EbpS</fullName>
    </recommendedName>
</protein>
<sequence length="460" mass="50695">MSNNNFKDDFEKNRQSINPDEHQTELKEDDKTNENKKEADSQNSLSNNSNQQFPPRNAQRRKRRRETATNQSKQQDDKHQKNSDAKTTEGSLDDRYDEAQLQQQHDKSQQQNKTEKQSQDNRMKDGKDAAIVNGTSESPEHKSKSTQNRPGPKAQQQKRKSESTQSKPSTNKDKKAATGAGIAGAAGVAGAAETSKRHHNKKDKQDSKHSNHENDEKSVKNDDQKQSKKGKKAAVGAGAAAGVGAAGVAHHNNQNKHHNEEKNSNQNNQYNDQSEGKKKGGFMKILLPLIAAILILGAIAIFGGMALNNHNDSKSDDQKIANQSKKDSDKKDGAQSEDNKDKKSDSNKDKKSDSDKNADDDSDNSSSNPNATSTNNNDNVANNNSNYTNQNQQDNANQNSNNQQATQGQQSHTVYGQENLYRIAIQYYGEGTQANVDKIKRANGLSSNNIHNGQTLVIPQ</sequence>
<evidence type="ECO:0000255" key="1"/>
<evidence type="ECO:0000255" key="2">
    <source>
        <dbReference type="PROSITE-ProRule" id="PRU01118"/>
    </source>
</evidence>
<evidence type="ECO:0000256" key="3">
    <source>
        <dbReference type="SAM" id="MobiDB-lite"/>
    </source>
</evidence>
<evidence type="ECO:0000305" key="4"/>
<gene>
    <name type="primary">ebpS</name>
    <name type="ordered locus">SERP1048</name>
</gene>